<accession>Q5WYW3</accession>
<feature type="chain" id="PRO_0000113151" description="Aspartate carbamoyltransferase catalytic subunit">
    <location>
        <begin position="1"/>
        <end position="297"/>
    </location>
</feature>
<feature type="binding site" evidence="1">
    <location>
        <position position="49"/>
    </location>
    <ligand>
        <name>carbamoyl phosphate</name>
        <dbReference type="ChEBI" id="CHEBI:58228"/>
    </ligand>
</feature>
<feature type="binding site" evidence="1">
    <location>
        <position position="50"/>
    </location>
    <ligand>
        <name>carbamoyl phosphate</name>
        <dbReference type="ChEBI" id="CHEBI:58228"/>
    </ligand>
</feature>
<feature type="binding site" evidence="1">
    <location>
        <position position="77"/>
    </location>
    <ligand>
        <name>L-aspartate</name>
        <dbReference type="ChEBI" id="CHEBI:29991"/>
    </ligand>
</feature>
<feature type="binding site" evidence="1">
    <location>
        <position position="99"/>
    </location>
    <ligand>
        <name>carbamoyl phosphate</name>
        <dbReference type="ChEBI" id="CHEBI:58228"/>
    </ligand>
</feature>
<feature type="binding site" evidence="1">
    <location>
        <position position="129"/>
    </location>
    <ligand>
        <name>carbamoyl phosphate</name>
        <dbReference type="ChEBI" id="CHEBI:58228"/>
    </ligand>
</feature>
<feature type="binding site" evidence="1">
    <location>
        <position position="132"/>
    </location>
    <ligand>
        <name>carbamoyl phosphate</name>
        <dbReference type="ChEBI" id="CHEBI:58228"/>
    </ligand>
</feature>
<feature type="binding site" evidence="1">
    <location>
        <position position="162"/>
    </location>
    <ligand>
        <name>L-aspartate</name>
        <dbReference type="ChEBI" id="CHEBI:29991"/>
    </ligand>
</feature>
<feature type="binding site" evidence="1">
    <location>
        <position position="215"/>
    </location>
    <ligand>
        <name>L-aspartate</name>
        <dbReference type="ChEBI" id="CHEBI:29991"/>
    </ligand>
</feature>
<feature type="binding site" evidence="1">
    <location>
        <position position="256"/>
    </location>
    <ligand>
        <name>carbamoyl phosphate</name>
        <dbReference type="ChEBI" id="CHEBI:58228"/>
    </ligand>
</feature>
<feature type="binding site" evidence="1">
    <location>
        <position position="257"/>
    </location>
    <ligand>
        <name>carbamoyl phosphate</name>
        <dbReference type="ChEBI" id="CHEBI:58228"/>
    </ligand>
</feature>
<name>PYRB_LEGPL</name>
<protein>
    <recommendedName>
        <fullName evidence="1">Aspartate carbamoyltransferase catalytic subunit</fullName>
        <ecNumber evidence="1">2.1.3.2</ecNumber>
    </recommendedName>
    <alternativeName>
        <fullName evidence="1">Aspartate transcarbamylase</fullName>
        <shortName evidence="1">ATCase</shortName>
    </alternativeName>
</protein>
<gene>
    <name evidence="1" type="primary">pyrB</name>
    <name type="ordered locus">lpl0622</name>
</gene>
<keyword id="KW-0665">Pyrimidine biosynthesis</keyword>
<keyword id="KW-0808">Transferase</keyword>
<comment type="function">
    <text evidence="1">Catalyzes the condensation of carbamoyl phosphate and aspartate to form carbamoyl aspartate and inorganic phosphate, the committed step in the de novo pyrimidine nucleotide biosynthesis pathway.</text>
</comment>
<comment type="catalytic activity">
    <reaction evidence="1">
        <text>carbamoyl phosphate + L-aspartate = N-carbamoyl-L-aspartate + phosphate + H(+)</text>
        <dbReference type="Rhea" id="RHEA:20013"/>
        <dbReference type="ChEBI" id="CHEBI:15378"/>
        <dbReference type="ChEBI" id="CHEBI:29991"/>
        <dbReference type="ChEBI" id="CHEBI:32814"/>
        <dbReference type="ChEBI" id="CHEBI:43474"/>
        <dbReference type="ChEBI" id="CHEBI:58228"/>
        <dbReference type="EC" id="2.1.3.2"/>
    </reaction>
</comment>
<comment type="pathway">
    <text evidence="1">Pyrimidine metabolism; UMP biosynthesis via de novo pathway; (S)-dihydroorotate from bicarbonate: step 2/3.</text>
</comment>
<comment type="subunit">
    <text evidence="1">Heterododecamer (2C3:3R2) of six catalytic PyrB chains organized as two trimers (C3), and six regulatory PyrI chains organized as three dimers (R2).</text>
</comment>
<comment type="similarity">
    <text evidence="1">Belongs to the aspartate/ornithine carbamoyltransferase superfamily. ATCase family.</text>
</comment>
<dbReference type="EC" id="2.1.3.2" evidence="1"/>
<dbReference type="EMBL" id="CR628337">
    <property type="protein sequence ID" value="CAH14855.1"/>
    <property type="molecule type" value="Genomic_DNA"/>
</dbReference>
<dbReference type="RefSeq" id="WP_011214809.1">
    <property type="nucleotide sequence ID" value="NC_006369.1"/>
</dbReference>
<dbReference type="SMR" id="Q5WYW3"/>
<dbReference type="KEGG" id="lpf:lpl0622"/>
<dbReference type="LegioList" id="lpl0622"/>
<dbReference type="HOGENOM" id="CLU_043846_2_0_6"/>
<dbReference type="UniPathway" id="UPA00070">
    <property type="reaction ID" value="UER00116"/>
</dbReference>
<dbReference type="Proteomes" id="UP000002517">
    <property type="component" value="Chromosome"/>
</dbReference>
<dbReference type="GO" id="GO:0005829">
    <property type="term" value="C:cytosol"/>
    <property type="evidence" value="ECO:0007669"/>
    <property type="project" value="TreeGrafter"/>
</dbReference>
<dbReference type="GO" id="GO:0016597">
    <property type="term" value="F:amino acid binding"/>
    <property type="evidence" value="ECO:0007669"/>
    <property type="project" value="InterPro"/>
</dbReference>
<dbReference type="GO" id="GO:0004070">
    <property type="term" value="F:aspartate carbamoyltransferase activity"/>
    <property type="evidence" value="ECO:0007669"/>
    <property type="project" value="UniProtKB-UniRule"/>
</dbReference>
<dbReference type="GO" id="GO:0006207">
    <property type="term" value="P:'de novo' pyrimidine nucleobase biosynthetic process"/>
    <property type="evidence" value="ECO:0007669"/>
    <property type="project" value="InterPro"/>
</dbReference>
<dbReference type="GO" id="GO:0044205">
    <property type="term" value="P:'de novo' UMP biosynthetic process"/>
    <property type="evidence" value="ECO:0007669"/>
    <property type="project" value="UniProtKB-UniRule"/>
</dbReference>
<dbReference type="GO" id="GO:0006520">
    <property type="term" value="P:amino acid metabolic process"/>
    <property type="evidence" value="ECO:0007669"/>
    <property type="project" value="InterPro"/>
</dbReference>
<dbReference type="Gene3D" id="3.40.50.1370">
    <property type="entry name" value="Aspartate/ornithine carbamoyltransferase"/>
    <property type="match status" value="2"/>
</dbReference>
<dbReference type="HAMAP" id="MF_00001">
    <property type="entry name" value="Asp_carb_tr"/>
    <property type="match status" value="1"/>
</dbReference>
<dbReference type="InterPro" id="IPR006132">
    <property type="entry name" value="Asp/Orn_carbamoyltranf_P-bd"/>
</dbReference>
<dbReference type="InterPro" id="IPR006130">
    <property type="entry name" value="Asp/Orn_carbamoylTrfase"/>
</dbReference>
<dbReference type="InterPro" id="IPR036901">
    <property type="entry name" value="Asp/Orn_carbamoylTrfase_sf"/>
</dbReference>
<dbReference type="InterPro" id="IPR002082">
    <property type="entry name" value="Asp_carbamoyltransf"/>
</dbReference>
<dbReference type="InterPro" id="IPR006131">
    <property type="entry name" value="Asp_carbamoyltransf_Asp/Orn-bd"/>
</dbReference>
<dbReference type="NCBIfam" id="TIGR00670">
    <property type="entry name" value="asp_carb_tr"/>
    <property type="match status" value="1"/>
</dbReference>
<dbReference type="NCBIfam" id="NF002032">
    <property type="entry name" value="PRK00856.1"/>
    <property type="match status" value="1"/>
</dbReference>
<dbReference type="PANTHER" id="PTHR45753:SF6">
    <property type="entry name" value="ASPARTATE CARBAMOYLTRANSFERASE"/>
    <property type="match status" value="1"/>
</dbReference>
<dbReference type="PANTHER" id="PTHR45753">
    <property type="entry name" value="ORNITHINE CARBAMOYLTRANSFERASE, MITOCHONDRIAL"/>
    <property type="match status" value="1"/>
</dbReference>
<dbReference type="Pfam" id="PF00185">
    <property type="entry name" value="OTCace"/>
    <property type="match status" value="1"/>
</dbReference>
<dbReference type="Pfam" id="PF02729">
    <property type="entry name" value="OTCace_N"/>
    <property type="match status" value="1"/>
</dbReference>
<dbReference type="PRINTS" id="PR00100">
    <property type="entry name" value="AOTCASE"/>
</dbReference>
<dbReference type="PRINTS" id="PR00101">
    <property type="entry name" value="ATCASE"/>
</dbReference>
<dbReference type="SUPFAM" id="SSF53671">
    <property type="entry name" value="Aspartate/ornithine carbamoyltransferase"/>
    <property type="match status" value="1"/>
</dbReference>
<dbReference type="PROSITE" id="PS00097">
    <property type="entry name" value="CARBAMOYLTRANSFERASE"/>
    <property type="match status" value="1"/>
</dbReference>
<proteinExistence type="inferred from homology"/>
<reference key="1">
    <citation type="journal article" date="2004" name="Nat. Genet.">
        <title>Evidence in the Legionella pneumophila genome for exploitation of host cell functions and high genome plasticity.</title>
        <authorList>
            <person name="Cazalet C."/>
            <person name="Rusniok C."/>
            <person name="Brueggemann H."/>
            <person name="Zidane N."/>
            <person name="Magnier A."/>
            <person name="Ma L."/>
            <person name="Tichit M."/>
            <person name="Jarraud S."/>
            <person name="Bouchier C."/>
            <person name="Vandenesch F."/>
            <person name="Kunst F."/>
            <person name="Etienne J."/>
            <person name="Glaser P."/>
            <person name="Buchrieser C."/>
        </authorList>
    </citation>
    <scope>NUCLEOTIDE SEQUENCE [LARGE SCALE GENOMIC DNA]</scope>
    <source>
        <strain>Lens</strain>
    </source>
</reference>
<evidence type="ECO:0000255" key="1">
    <source>
        <dbReference type="HAMAP-Rule" id="MF_00001"/>
    </source>
</evidence>
<sequence>MKHFIEISQLSSEQIESLLQRALYFKHTKQYPSYSQSIIANLFYENSTRTRISFELAERHLAMSVVNLDLETSSETKGEAIEDTIRTLAAMGIQYFVIRHKQDGLQQNLANKLGDTVHIINAGDGTHAHPSQAILDMVTIVEQKKQLDKLKIAILGNIKHSRVANSFQCICSKLGVGELVLISPEIWQPSQVHFGRVTDNLNEGLEGADVVICLRVQKERLLQDDHLDLDFYRNNFALTQKSLSYAKPDAMVMHPGPMNRGVEIDSEVADGNQSCILQQVTNGVYARMAILESLIAS</sequence>
<organism>
    <name type="scientific">Legionella pneumophila (strain Lens)</name>
    <dbReference type="NCBI Taxonomy" id="297245"/>
    <lineage>
        <taxon>Bacteria</taxon>
        <taxon>Pseudomonadati</taxon>
        <taxon>Pseudomonadota</taxon>
        <taxon>Gammaproteobacteria</taxon>
        <taxon>Legionellales</taxon>
        <taxon>Legionellaceae</taxon>
        <taxon>Legionella</taxon>
    </lineage>
</organism>